<dbReference type="EMBL" id="J01257">
    <property type="protein sequence ID" value="AAA33686.1"/>
    <property type="molecule type" value="mRNA"/>
</dbReference>
<dbReference type="EMBL" id="X00806">
    <property type="protein sequence ID" value="CAA25390.1"/>
    <property type="molecule type" value="Genomic_DNA"/>
</dbReference>
<dbReference type="EMBL" id="X04334">
    <property type="protein sequence ID" value="CAA27865.1"/>
    <property type="molecule type" value="Genomic_DNA"/>
</dbReference>
<dbReference type="PIR" id="A01088">
    <property type="entry name" value="RKPMS5"/>
</dbReference>
<dbReference type="SMR" id="P00869"/>
<dbReference type="EnsemblPlants" id="Psat3g205240.1">
    <property type="protein sequence ID" value="Psat3g205240.1.cds"/>
    <property type="gene ID" value="Psat3g205240"/>
</dbReference>
<dbReference type="Gramene" id="Psat3g205240.1">
    <property type="protein sequence ID" value="Psat3g205240.1.cds"/>
    <property type="gene ID" value="Psat3g205240"/>
</dbReference>
<dbReference type="OrthoDB" id="561at2759"/>
<dbReference type="GO" id="GO:0009507">
    <property type="term" value="C:chloroplast"/>
    <property type="evidence" value="ECO:0007669"/>
    <property type="project" value="UniProtKB-SubCell"/>
</dbReference>
<dbReference type="GO" id="GO:0016984">
    <property type="term" value="F:ribulose-bisphosphate carboxylase activity"/>
    <property type="evidence" value="ECO:0007669"/>
    <property type="project" value="UniProtKB-UniRule"/>
</dbReference>
<dbReference type="GO" id="GO:0009853">
    <property type="term" value="P:photorespiration"/>
    <property type="evidence" value="ECO:0007669"/>
    <property type="project" value="UniProtKB-KW"/>
</dbReference>
<dbReference type="GO" id="GO:0019253">
    <property type="term" value="P:reductive pentose-phosphate cycle"/>
    <property type="evidence" value="ECO:0007669"/>
    <property type="project" value="UniProtKB-UniRule"/>
</dbReference>
<dbReference type="CDD" id="cd03527">
    <property type="entry name" value="RuBisCO_small"/>
    <property type="match status" value="1"/>
</dbReference>
<dbReference type="FunFam" id="3.30.190.10:FF:000001">
    <property type="entry name" value="Ribulose bisphosphate carboxylase small chain, chloroplastic"/>
    <property type="match status" value="1"/>
</dbReference>
<dbReference type="Gene3D" id="3.30.190.10">
    <property type="entry name" value="Ribulose bisphosphate carboxylase, small subunit"/>
    <property type="match status" value="1"/>
</dbReference>
<dbReference type="HAMAP" id="MF_00859">
    <property type="entry name" value="RuBisCO_S_bact"/>
    <property type="match status" value="1"/>
</dbReference>
<dbReference type="InterPro" id="IPR024681">
    <property type="entry name" value="RuBisCO_ssu"/>
</dbReference>
<dbReference type="InterPro" id="IPR000894">
    <property type="entry name" value="RuBisCO_ssu_dom"/>
</dbReference>
<dbReference type="InterPro" id="IPR024680">
    <property type="entry name" value="RuBisCO_ssu_N"/>
</dbReference>
<dbReference type="InterPro" id="IPR036385">
    <property type="entry name" value="RuBisCO_ssu_sf"/>
</dbReference>
<dbReference type="PANTHER" id="PTHR31262">
    <property type="entry name" value="RIBULOSE BISPHOSPHATE CARBOXYLASE SMALL CHAIN 1, CHLOROPLASTIC"/>
    <property type="match status" value="1"/>
</dbReference>
<dbReference type="PANTHER" id="PTHR31262:SF19">
    <property type="entry name" value="RIBULOSE BISPHOSPHATE CARBOXYLASE SMALL SUBUNIT, CHLOROPLASTIC 2"/>
    <property type="match status" value="1"/>
</dbReference>
<dbReference type="Pfam" id="PF12338">
    <property type="entry name" value="RbcS"/>
    <property type="match status" value="1"/>
</dbReference>
<dbReference type="Pfam" id="PF00101">
    <property type="entry name" value="RuBisCO_small"/>
    <property type="match status" value="1"/>
</dbReference>
<dbReference type="PRINTS" id="PR00152">
    <property type="entry name" value="RUBISCOSMALL"/>
</dbReference>
<dbReference type="SMART" id="SM00961">
    <property type="entry name" value="RuBisCO_small"/>
    <property type="match status" value="1"/>
</dbReference>
<dbReference type="SUPFAM" id="SSF55239">
    <property type="entry name" value="RuBisCO, small subunit"/>
    <property type="match status" value="1"/>
</dbReference>
<keyword id="KW-0113">Calvin cycle</keyword>
<keyword id="KW-0120">Carbon dioxide fixation</keyword>
<keyword id="KW-0150">Chloroplast</keyword>
<keyword id="KW-0601">Photorespiration</keyword>
<keyword id="KW-0602">Photosynthesis</keyword>
<keyword id="KW-0934">Plastid</keyword>
<keyword id="KW-0809">Transit peptide</keyword>
<proteinExistence type="evidence at transcript level"/>
<sequence length="180" mass="20244">MASMISSSAVTTVSRASRGQSAAVAPFGGLKSMTGFPVKKVNTDITSITSNGGRVKCMQVWPPIGKKKFETLSYLPPLTRDQLLKEVEYLLRKGWVPCLEFELEKGFVYREHNKSPGYYDGRYWTMWKLPMFGTTDASQVLKELDEVVAAYPQAFVRIIGFDNVRQVQCISFIAHTPESY</sequence>
<name>RBS2_PEA</name>
<protein>
    <recommendedName>
        <fullName evidence="1">Ribulose bisphosphate carboxylase small subunit, chloroplastic 2</fullName>
        <shortName evidence="1">RuBisCO small subunit 2</shortName>
    </recommendedName>
    <alternativeName>
        <fullName>PSS15</fullName>
    </alternativeName>
    <alternativeName>
        <fullName>Ribulose bisphosphate carboxylase small chain 3C, chloroplastic</fullName>
        <shortName>RuBisCO small subunit 3C</shortName>
    </alternativeName>
</protein>
<accession>P00869</accession>
<reference key="1">
    <citation type="journal article" date="1984" name="EMBO J.">
        <title>Tissue-specific and light-regulated expression of a pea nuclear gene encoding the small subunit of ribulose-1,5-bisphosphate carboxylase.</title>
        <authorList>
            <person name="Coruzzi G."/>
            <person name="Broglie R."/>
            <person name="Edwards C."/>
            <person name="Chua N.-H."/>
        </authorList>
    </citation>
    <scope>NUCLEOTIDE SEQUENCE [GENOMIC DNA] (PSS15)</scope>
    <source>
        <strain>cv. Progress No. 9</strain>
    </source>
</reference>
<reference key="2">
    <citation type="journal article" date="1986" name="EMBO J.">
        <title>Expression dynamics of the pea rbcS multigene family and organ distribution of the transcripts.</title>
        <authorList>
            <person name="Fluhr R."/>
            <person name="Moses P."/>
            <person name="Morelli G."/>
            <person name="Coruzzi G."/>
            <person name="Chua N.-H."/>
        </authorList>
    </citation>
    <scope>NUCLEOTIDE SEQUENCE (RBCS-3C)</scope>
</reference>
<reference key="3">
    <citation type="journal article" date="1983" name="J. Biol. Chem.">
        <title>Nucleotide sequences of two pea cDNA clones encoding the small subunit of ribulose 1,5-bisphosphate carboxylase and the major chlorophyll a/b-binding thylakoid polypeptide.</title>
        <authorList>
            <person name="Coruzzi G."/>
            <person name="Broglie R."/>
            <person name="Cashmore A."/>
            <person name="Chua N.-H."/>
        </authorList>
    </citation>
    <scope>NUCLEOTIDE SEQUENCE [MRNA] OF 25-180</scope>
</reference>
<gene>
    <name evidence="1" type="primary">RBCS2</name>
    <name type="synonym">RBCS-3C</name>
</gene>
<organism>
    <name type="scientific">Pisum sativum</name>
    <name type="common">Garden pea</name>
    <name type="synonym">Lathyrus oleraceus</name>
    <dbReference type="NCBI Taxonomy" id="3888"/>
    <lineage>
        <taxon>Eukaryota</taxon>
        <taxon>Viridiplantae</taxon>
        <taxon>Streptophyta</taxon>
        <taxon>Embryophyta</taxon>
        <taxon>Tracheophyta</taxon>
        <taxon>Spermatophyta</taxon>
        <taxon>Magnoliopsida</taxon>
        <taxon>eudicotyledons</taxon>
        <taxon>Gunneridae</taxon>
        <taxon>Pentapetalae</taxon>
        <taxon>rosids</taxon>
        <taxon>fabids</taxon>
        <taxon>Fabales</taxon>
        <taxon>Fabaceae</taxon>
        <taxon>Papilionoideae</taxon>
        <taxon>50 kb inversion clade</taxon>
        <taxon>NPAAA clade</taxon>
        <taxon>Hologalegina</taxon>
        <taxon>IRL clade</taxon>
        <taxon>Fabeae</taxon>
        <taxon>Pisum</taxon>
    </lineage>
</organism>
<evidence type="ECO:0000255" key="1">
    <source>
        <dbReference type="HAMAP-Rule" id="MF_00860"/>
    </source>
</evidence>
<evidence type="ECO:0000305" key="2"/>
<feature type="transit peptide" description="Chloroplast" evidence="1">
    <location>
        <begin position="1"/>
        <end position="56"/>
    </location>
</feature>
<feature type="chain" id="PRO_0000031541" description="Ribulose bisphosphate carboxylase small subunit, chloroplastic 2" evidence="1">
    <location>
        <begin position="57"/>
        <end position="180"/>
    </location>
</feature>
<feature type="sequence conflict" description="In Ref. 3; AAA33686." evidence="2" ref="3">
    <original>A</original>
    <variation>G</variation>
    <location>
        <position position="25"/>
    </location>
</feature>
<feature type="sequence conflict" description="In Ref. 3; AAA33686." evidence="2" ref="3">
    <original>S</original>
    <variation>F</variation>
    <location>
        <position position="32"/>
    </location>
</feature>
<feature type="sequence conflict" description="In Ref. 3; AAA33686." evidence="2" ref="3">
    <original>G</original>
    <variation>R</variation>
    <location>
        <position position="117"/>
    </location>
</feature>
<comment type="function">
    <text evidence="1">RuBisCO catalyzes two reactions: the carboxylation of D-ribulose 1,5-bisphosphate, the primary event in carbon dioxide fixation, as well as the oxidative fragmentation of the pentose substrate. Both reactions occur simultaneously and in competition at the same active site. Although the small subunit is not catalytic it is essential for maximal activity.</text>
</comment>
<comment type="subunit">
    <text evidence="1">Heterohexadecamer of 8 large and 8 small subunits.</text>
</comment>
<comment type="subcellular location">
    <subcellularLocation>
        <location evidence="1">Plastid</location>
        <location evidence="1">Chloroplast</location>
    </subcellularLocation>
</comment>
<comment type="miscellaneous">
    <text evidence="1">The basic functional RuBisCO is composed of a large chain homodimer in a 'head-to-tail' conformation. In form I RuBisCO this homodimer is arranged in a barrel-like tetramer with the small subunits forming a tetrameric 'cap' on each end of the 'barrel'.</text>
</comment>
<comment type="similarity">
    <text evidence="1">Belongs to the RuBisCO small chain family.</text>
</comment>